<organism>
    <name type="scientific">Enterobacter sp. (strain 638)</name>
    <dbReference type="NCBI Taxonomy" id="399742"/>
    <lineage>
        <taxon>Bacteria</taxon>
        <taxon>Pseudomonadati</taxon>
        <taxon>Pseudomonadota</taxon>
        <taxon>Gammaproteobacteria</taxon>
        <taxon>Enterobacterales</taxon>
        <taxon>Enterobacteriaceae</taxon>
        <taxon>Enterobacter</taxon>
    </lineage>
</organism>
<gene>
    <name evidence="1" type="primary">maeA</name>
    <name type="ordered locus">Ent638_2047</name>
</gene>
<dbReference type="EC" id="1.1.1.38" evidence="1"/>
<dbReference type="EMBL" id="CP000653">
    <property type="protein sequence ID" value="ABP60723.1"/>
    <property type="molecule type" value="Genomic_DNA"/>
</dbReference>
<dbReference type="RefSeq" id="WP_012017438.1">
    <property type="nucleotide sequence ID" value="NC_009436.1"/>
</dbReference>
<dbReference type="SMR" id="A4WAJ3"/>
<dbReference type="STRING" id="399742.Ent638_2047"/>
<dbReference type="KEGG" id="ent:Ent638_2047"/>
<dbReference type="eggNOG" id="COG0281">
    <property type="taxonomic scope" value="Bacteria"/>
</dbReference>
<dbReference type="HOGENOM" id="CLU_011405_5_2_6"/>
<dbReference type="OrthoDB" id="3314528at2"/>
<dbReference type="Proteomes" id="UP000000230">
    <property type="component" value="Chromosome"/>
</dbReference>
<dbReference type="GO" id="GO:0005829">
    <property type="term" value="C:cytosol"/>
    <property type="evidence" value="ECO:0007669"/>
    <property type="project" value="TreeGrafter"/>
</dbReference>
<dbReference type="GO" id="GO:0004471">
    <property type="term" value="F:malate dehydrogenase (decarboxylating) (NAD+) activity"/>
    <property type="evidence" value="ECO:0007669"/>
    <property type="project" value="UniProtKB-UniRule"/>
</dbReference>
<dbReference type="GO" id="GO:0046872">
    <property type="term" value="F:metal ion binding"/>
    <property type="evidence" value="ECO:0007669"/>
    <property type="project" value="UniProtKB-KW"/>
</dbReference>
<dbReference type="GO" id="GO:0051287">
    <property type="term" value="F:NAD binding"/>
    <property type="evidence" value="ECO:0007669"/>
    <property type="project" value="InterPro"/>
</dbReference>
<dbReference type="GO" id="GO:0008948">
    <property type="term" value="F:oxaloacetate decarboxylase activity"/>
    <property type="evidence" value="ECO:0007669"/>
    <property type="project" value="UniProtKB-UniRule"/>
</dbReference>
<dbReference type="GO" id="GO:0006108">
    <property type="term" value="P:malate metabolic process"/>
    <property type="evidence" value="ECO:0007669"/>
    <property type="project" value="TreeGrafter"/>
</dbReference>
<dbReference type="CDD" id="cd05312">
    <property type="entry name" value="NAD_bind_1_malic_enz"/>
    <property type="match status" value="1"/>
</dbReference>
<dbReference type="FunFam" id="3.40.50.10380:FF:000001">
    <property type="entry name" value="NAD-dependent malic enzyme"/>
    <property type="match status" value="1"/>
</dbReference>
<dbReference type="FunFam" id="3.40.50.720:FF:000055">
    <property type="entry name" value="NAD-dependent malic enzyme"/>
    <property type="match status" value="1"/>
</dbReference>
<dbReference type="Gene3D" id="3.40.50.10380">
    <property type="entry name" value="Malic enzyme, N-terminal domain"/>
    <property type="match status" value="1"/>
</dbReference>
<dbReference type="Gene3D" id="3.40.50.720">
    <property type="entry name" value="NAD(P)-binding Rossmann-like Domain"/>
    <property type="match status" value="1"/>
</dbReference>
<dbReference type="HAMAP" id="MF_01619">
    <property type="entry name" value="NAD_malic_enz"/>
    <property type="match status" value="1"/>
</dbReference>
<dbReference type="InterPro" id="IPR046346">
    <property type="entry name" value="Aminoacid_DH-like_N_sf"/>
</dbReference>
<dbReference type="InterPro" id="IPR015884">
    <property type="entry name" value="Malic_enzyme_CS"/>
</dbReference>
<dbReference type="InterPro" id="IPR012301">
    <property type="entry name" value="Malic_N_dom"/>
</dbReference>
<dbReference type="InterPro" id="IPR037062">
    <property type="entry name" value="Malic_N_dom_sf"/>
</dbReference>
<dbReference type="InterPro" id="IPR012302">
    <property type="entry name" value="Malic_NAD-bd"/>
</dbReference>
<dbReference type="InterPro" id="IPR001891">
    <property type="entry name" value="Malic_OxRdtase"/>
</dbReference>
<dbReference type="InterPro" id="IPR036291">
    <property type="entry name" value="NAD(P)-bd_dom_sf"/>
</dbReference>
<dbReference type="InterPro" id="IPR023667">
    <property type="entry name" value="NAD_malic_enz_proteobac"/>
</dbReference>
<dbReference type="NCBIfam" id="NF010052">
    <property type="entry name" value="PRK13529.1"/>
    <property type="match status" value="1"/>
</dbReference>
<dbReference type="PANTHER" id="PTHR23406">
    <property type="entry name" value="MALIC ENZYME-RELATED"/>
    <property type="match status" value="1"/>
</dbReference>
<dbReference type="PANTHER" id="PTHR23406:SF34">
    <property type="entry name" value="NAD-DEPENDENT MALIC ENZYME, MITOCHONDRIAL"/>
    <property type="match status" value="1"/>
</dbReference>
<dbReference type="Pfam" id="PF00390">
    <property type="entry name" value="malic"/>
    <property type="match status" value="1"/>
</dbReference>
<dbReference type="Pfam" id="PF03949">
    <property type="entry name" value="Malic_M"/>
    <property type="match status" value="1"/>
</dbReference>
<dbReference type="PIRSF" id="PIRSF000106">
    <property type="entry name" value="ME"/>
    <property type="match status" value="1"/>
</dbReference>
<dbReference type="PRINTS" id="PR00072">
    <property type="entry name" value="MALOXRDTASE"/>
</dbReference>
<dbReference type="SMART" id="SM01274">
    <property type="entry name" value="malic"/>
    <property type="match status" value="1"/>
</dbReference>
<dbReference type="SMART" id="SM00919">
    <property type="entry name" value="Malic_M"/>
    <property type="match status" value="1"/>
</dbReference>
<dbReference type="SUPFAM" id="SSF53223">
    <property type="entry name" value="Aminoacid dehydrogenase-like, N-terminal domain"/>
    <property type="match status" value="1"/>
</dbReference>
<dbReference type="SUPFAM" id="SSF51735">
    <property type="entry name" value="NAD(P)-binding Rossmann-fold domains"/>
    <property type="match status" value="1"/>
</dbReference>
<dbReference type="PROSITE" id="PS00331">
    <property type="entry name" value="MALIC_ENZYMES"/>
    <property type="match status" value="1"/>
</dbReference>
<feature type="chain" id="PRO_1000069531" description="NAD-dependent malic enzyme">
    <location>
        <begin position="1"/>
        <end position="565"/>
    </location>
</feature>
<feature type="active site" description="Proton donor" evidence="1">
    <location>
        <position position="104"/>
    </location>
</feature>
<feature type="active site" description="Proton acceptor" evidence="1">
    <location>
        <position position="175"/>
    </location>
</feature>
<feature type="binding site" evidence="1">
    <location>
        <position position="157"/>
    </location>
    <ligand>
        <name>NAD(+)</name>
        <dbReference type="ChEBI" id="CHEBI:57540"/>
    </ligand>
</feature>
<feature type="binding site" evidence="1">
    <location>
        <position position="246"/>
    </location>
    <ligand>
        <name>a divalent metal cation</name>
        <dbReference type="ChEBI" id="CHEBI:60240"/>
    </ligand>
</feature>
<feature type="binding site" evidence="1">
    <location>
        <position position="247"/>
    </location>
    <ligand>
        <name>a divalent metal cation</name>
        <dbReference type="ChEBI" id="CHEBI:60240"/>
    </ligand>
</feature>
<feature type="binding site" evidence="1">
    <location>
        <position position="270"/>
    </location>
    <ligand>
        <name>a divalent metal cation</name>
        <dbReference type="ChEBI" id="CHEBI:60240"/>
    </ligand>
</feature>
<feature type="binding site" evidence="1">
    <location>
        <position position="270"/>
    </location>
    <ligand>
        <name>NAD(+)</name>
        <dbReference type="ChEBI" id="CHEBI:57540"/>
    </ligand>
</feature>
<feature type="binding site" evidence="1">
    <location>
        <position position="418"/>
    </location>
    <ligand>
        <name>NAD(+)</name>
        <dbReference type="ChEBI" id="CHEBI:57540"/>
    </ligand>
</feature>
<feature type="site" description="Important for activity" evidence="1">
    <location>
        <position position="270"/>
    </location>
</feature>
<reference key="1">
    <citation type="journal article" date="2010" name="PLoS Genet.">
        <title>Genome sequence of the plant growth promoting endophytic bacterium Enterobacter sp. 638.</title>
        <authorList>
            <person name="Taghavi S."/>
            <person name="van der Lelie D."/>
            <person name="Hoffman A."/>
            <person name="Zhang Y.B."/>
            <person name="Walla M.D."/>
            <person name="Vangronsveld J."/>
            <person name="Newman L."/>
            <person name="Monchy S."/>
        </authorList>
    </citation>
    <scope>NUCLEOTIDE SEQUENCE [LARGE SCALE GENOMIC DNA]</scope>
    <source>
        <strain>638</strain>
    </source>
</reference>
<comment type="catalytic activity">
    <reaction evidence="1">
        <text>(S)-malate + NAD(+) = pyruvate + CO2 + NADH</text>
        <dbReference type="Rhea" id="RHEA:12653"/>
        <dbReference type="ChEBI" id="CHEBI:15361"/>
        <dbReference type="ChEBI" id="CHEBI:15589"/>
        <dbReference type="ChEBI" id="CHEBI:16526"/>
        <dbReference type="ChEBI" id="CHEBI:57540"/>
        <dbReference type="ChEBI" id="CHEBI:57945"/>
        <dbReference type="EC" id="1.1.1.38"/>
    </reaction>
</comment>
<comment type="catalytic activity">
    <reaction evidence="1">
        <text>oxaloacetate + H(+) = pyruvate + CO2</text>
        <dbReference type="Rhea" id="RHEA:15641"/>
        <dbReference type="ChEBI" id="CHEBI:15361"/>
        <dbReference type="ChEBI" id="CHEBI:15378"/>
        <dbReference type="ChEBI" id="CHEBI:16452"/>
        <dbReference type="ChEBI" id="CHEBI:16526"/>
        <dbReference type="EC" id="1.1.1.38"/>
    </reaction>
</comment>
<comment type="cofactor">
    <cofactor evidence="1">
        <name>Mg(2+)</name>
        <dbReference type="ChEBI" id="CHEBI:18420"/>
    </cofactor>
    <cofactor evidence="1">
        <name>Mn(2+)</name>
        <dbReference type="ChEBI" id="CHEBI:29035"/>
    </cofactor>
    <text evidence="1">Divalent metal cations. Prefers magnesium or manganese.</text>
</comment>
<comment type="subunit">
    <text evidence="1">Homotetramer.</text>
</comment>
<comment type="similarity">
    <text evidence="1">Belongs to the malic enzymes family.</text>
</comment>
<proteinExistence type="inferred from homology"/>
<evidence type="ECO:0000255" key="1">
    <source>
        <dbReference type="HAMAP-Rule" id="MF_01619"/>
    </source>
</evidence>
<protein>
    <recommendedName>
        <fullName evidence="1">NAD-dependent malic enzyme</fullName>
        <shortName evidence="1">NAD-ME</shortName>
        <ecNumber evidence="1">1.1.1.38</ecNumber>
    </recommendedName>
</protein>
<accession>A4WAJ3</accession>
<keyword id="KW-0479">Metal-binding</keyword>
<keyword id="KW-0520">NAD</keyword>
<keyword id="KW-0560">Oxidoreductase</keyword>
<sequence length="565" mass="63216">MDKKTKKHRSLYIPYAGPVLLEFPLLNKGSAFSAEERSSFNLLGLLPEVVETIEEQAERAWIQYQGFKTEIDKHIYLRNIQDTNETLFYRLVQNHLEEMMPVIYTPTVGAACERFSEIYRRSRGVFISYENRHNMDDILQNVPNHNIKVIVVTDGERILGLGDQGIGGMGIPIGKLSLYTACGGISPAYTLPVVLDVGTNNQQLLTDPLYMGWRHPRVTDDEYYQFVDDFIQAVKHRWPDVLLQFEDFAQKNAMPLLNRYRDEICSFNDDIQGTAAVTAGTLIAASRAAGSQLSYQKIVFLGAGSAGCGIAEQIIAQTQREGLSEELARSRVFMVDRFGLLTDAMPNLLPFQTKLVQKRENLKNWDTDNEVLSLLDVVRNVKPDILIGVSGQTGLFTEEIIREMHKHCERPIVMPLSNPTSRVEATPQDIIVWTEGNALVATGSPFDPVIWKDKVYPIAQCNNSYIFPGIGLGVIASGASRITDEMLMSASETLAQHSPLVKNGEGLVLPELKDIHIVSRAIAFAVGKMAQQQGVAVKTSADALQQAIDENFWMPEYRSYRRTSI</sequence>
<name>MAO1_ENT38</name>